<sequence>MKSQSKRTSRLFVFVGVVVAIIIAVLSWRYFGTGSDNNTSGAQQSARGQDTSHGGRRNTPLAPVQAATATEQEVPRYLTGLGTVIAANTVTVTSRVDGELMALHFTEGQQVKAGDLLAEIDPRPYEVQLTQAQGQLAKDQATLDNARRDLARYQKLSKTGLISQQELDTQSSLVRQSEGSVKADQGAIDSAKLQLTYSRITAPISGRVGLKQVDVGNYITSGTATPIVVITQTHPVDVVFTLPESDIPAIIQAQKNAEKTHAIVPVEAWDRTNKQMLAQGYLLSIDNQIDTTTGTIKLKARFNNEDDVLFPNQFVNARIKVDLLQNAVVVPTAAVQMGSEGNFVWTLDDANKVSKHLVTTGIQNSQQVVIDAGLNAGQRVVTDGIDRLTEGVQVEVVTPRSANTDANPASAEKAAAEAEGSTPHQGRGRPANAPARSTTAAEKS</sequence>
<name>MDTA_YERPE</name>
<keyword id="KW-0997">Cell inner membrane</keyword>
<keyword id="KW-1003">Cell membrane</keyword>
<keyword id="KW-0472">Membrane</keyword>
<keyword id="KW-1185">Reference proteome</keyword>
<keyword id="KW-0732">Signal</keyword>
<keyword id="KW-0813">Transport</keyword>
<comment type="subunit">
    <text evidence="1">Part of a tripartite efflux system composed of MdtA, MdtB and MdtC.</text>
</comment>
<comment type="subcellular location">
    <subcellularLocation>
        <location evidence="1">Cell inner membrane</location>
        <topology evidence="1">Peripheral membrane protein</topology>
    </subcellularLocation>
</comment>
<comment type="similarity">
    <text evidence="1">Belongs to the membrane fusion protein (MFP) (TC 8.A.1) family.</text>
</comment>
<feature type="signal peptide" evidence="1">
    <location>
        <begin position="1"/>
        <end position="20"/>
    </location>
</feature>
<feature type="chain" id="PRO_0000018706" description="Multidrug resistance protein MdtA">
    <location>
        <begin position="21"/>
        <end position="444"/>
    </location>
</feature>
<feature type="region of interest" description="Disordered" evidence="2">
    <location>
        <begin position="37"/>
        <end position="60"/>
    </location>
</feature>
<feature type="region of interest" description="Disordered" evidence="2">
    <location>
        <begin position="398"/>
        <end position="444"/>
    </location>
</feature>
<feature type="compositionally biased region" description="Polar residues" evidence="2">
    <location>
        <begin position="37"/>
        <end position="52"/>
    </location>
</feature>
<feature type="compositionally biased region" description="Low complexity" evidence="2">
    <location>
        <begin position="406"/>
        <end position="419"/>
    </location>
</feature>
<feature type="compositionally biased region" description="Polar residues" evidence="2">
    <location>
        <begin position="435"/>
        <end position="444"/>
    </location>
</feature>
<protein>
    <recommendedName>
        <fullName evidence="1">Multidrug resistance protein MdtA</fullName>
    </recommendedName>
    <alternativeName>
        <fullName evidence="1">Multidrug transporter MdtA</fullName>
    </alternativeName>
</protein>
<evidence type="ECO:0000255" key="1">
    <source>
        <dbReference type="HAMAP-Rule" id="MF_01422"/>
    </source>
</evidence>
<evidence type="ECO:0000256" key="2">
    <source>
        <dbReference type="SAM" id="MobiDB-lite"/>
    </source>
</evidence>
<accession>Q8ZCW1</accession>
<accession>Q0WD53</accession>
<accession>Q74SA8</accession>
<accession>Q7CJK8</accession>
<dbReference type="EMBL" id="AL590842">
    <property type="protein sequence ID" value="CAL21459.1"/>
    <property type="molecule type" value="Genomic_DNA"/>
</dbReference>
<dbReference type="EMBL" id="AE009952">
    <property type="protein sequence ID" value="AAM84958.1"/>
    <property type="molecule type" value="Genomic_DNA"/>
</dbReference>
<dbReference type="EMBL" id="AE017042">
    <property type="protein sequence ID" value="AAS62903.1"/>
    <property type="molecule type" value="Genomic_DNA"/>
</dbReference>
<dbReference type="PIR" id="AH0346">
    <property type="entry name" value="AH0346"/>
</dbReference>
<dbReference type="RefSeq" id="WP_002214676.1">
    <property type="nucleotide sequence ID" value="NZ_WUCM01000037.1"/>
</dbReference>
<dbReference type="RefSeq" id="YP_002347785.1">
    <property type="nucleotide sequence ID" value="NC_003143.1"/>
</dbReference>
<dbReference type="SMR" id="Q8ZCW1"/>
<dbReference type="IntAct" id="Q8ZCW1">
    <property type="interactions" value="3"/>
</dbReference>
<dbReference type="STRING" id="214092.YPO2847"/>
<dbReference type="PaxDb" id="214092-YPO2847"/>
<dbReference type="DNASU" id="1146333"/>
<dbReference type="EnsemblBacteria" id="AAS62903">
    <property type="protein sequence ID" value="AAS62903"/>
    <property type="gene ID" value="YP_2714"/>
</dbReference>
<dbReference type="KEGG" id="ype:YPO2847"/>
<dbReference type="KEGG" id="ypk:y1386"/>
<dbReference type="KEGG" id="ypm:YP_2714"/>
<dbReference type="PATRIC" id="fig|214092.21.peg.3291"/>
<dbReference type="eggNOG" id="COG0845">
    <property type="taxonomic scope" value="Bacteria"/>
</dbReference>
<dbReference type="HOGENOM" id="CLU_018816_2_0_6"/>
<dbReference type="OMA" id="GQLMAIH"/>
<dbReference type="OrthoDB" id="9783047at2"/>
<dbReference type="Proteomes" id="UP000000815">
    <property type="component" value="Chromosome"/>
</dbReference>
<dbReference type="Proteomes" id="UP000001019">
    <property type="component" value="Chromosome"/>
</dbReference>
<dbReference type="Proteomes" id="UP000002490">
    <property type="component" value="Chromosome"/>
</dbReference>
<dbReference type="GO" id="GO:1990281">
    <property type="term" value="C:efflux pump complex"/>
    <property type="evidence" value="ECO:0000318"/>
    <property type="project" value="GO_Central"/>
</dbReference>
<dbReference type="GO" id="GO:0005886">
    <property type="term" value="C:plasma membrane"/>
    <property type="evidence" value="ECO:0007669"/>
    <property type="project" value="UniProtKB-SubCell"/>
</dbReference>
<dbReference type="GO" id="GO:0015562">
    <property type="term" value="F:efflux transmembrane transporter activity"/>
    <property type="evidence" value="ECO:0000318"/>
    <property type="project" value="GO_Central"/>
</dbReference>
<dbReference type="FunFam" id="2.40.420.20:FF:000001">
    <property type="entry name" value="Efflux RND transporter periplasmic adaptor subunit"/>
    <property type="match status" value="1"/>
</dbReference>
<dbReference type="FunFam" id="1.10.287.470:FF:000005">
    <property type="entry name" value="Multidrug resistance protein MdtA"/>
    <property type="match status" value="1"/>
</dbReference>
<dbReference type="FunFam" id="2.40.30.170:FF:000006">
    <property type="entry name" value="Multidrug resistance protein MdtA"/>
    <property type="match status" value="1"/>
</dbReference>
<dbReference type="Gene3D" id="2.40.30.170">
    <property type="match status" value="1"/>
</dbReference>
<dbReference type="Gene3D" id="2.40.420.20">
    <property type="match status" value="1"/>
</dbReference>
<dbReference type="Gene3D" id="2.40.50.100">
    <property type="match status" value="1"/>
</dbReference>
<dbReference type="Gene3D" id="1.10.287.470">
    <property type="entry name" value="Helix hairpin bin"/>
    <property type="match status" value="1"/>
</dbReference>
<dbReference type="HAMAP" id="MF_01422">
    <property type="entry name" value="MdtA"/>
    <property type="match status" value="1"/>
</dbReference>
<dbReference type="InterPro" id="IPR032317">
    <property type="entry name" value="CusB_D23"/>
</dbReference>
<dbReference type="InterPro" id="IPR022824">
    <property type="entry name" value="Multidrug-R_MdtA"/>
</dbReference>
<dbReference type="InterPro" id="IPR006143">
    <property type="entry name" value="RND_pump_MFP"/>
</dbReference>
<dbReference type="NCBIfam" id="NF008589">
    <property type="entry name" value="PRK11556.1"/>
    <property type="match status" value="1"/>
</dbReference>
<dbReference type="NCBIfam" id="TIGR01730">
    <property type="entry name" value="RND_mfp"/>
    <property type="match status" value="1"/>
</dbReference>
<dbReference type="PANTHER" id="PTHR30469">
    <property type="entry name" value="MULTIDRUG RESISTANCE PROTEIN MDTA"/>
    <property type="match status" value="1"/>
</dbReference>
<dbReference type="PANTHER" id="PTHR30469:SF12">
    <property type="entry name" value="MULTIDRUG RESISTANCE PROTEIN MDTA"/>
    <property type="match status" value="1"/>
</dbReference>
<dbReference type="Pfam" id="PF16576">
    <property type="entry name" value="HlyD_D23"/>
    <property type="match status" value="1"/>
</dbReference>
<dbReference type="SUPFAM" id="SSF111369">
    <property type="entry name" value="HlyD-like secretion proteins"/>
    <property type="match status" value="1"/>
</dbReference>
<proteinExistence type="inferred from homology"/>
<reference key="1">
    <citation type="journal article" date="2001" name="Nature">
        <title>Genome sequence of Yersinia pestis, the causative agent of plague.</title>
        <authorList>
            <person name="Parkhill J."/>
            <person name="Wren B.W."/>
            <person name="Thomson N.R."/>
            <person name="Titball R.W."/>
            <person name="Holden M.T.G."/>
            <person name="Prentice M.B."/>
            <person name="Sebaihia M."/>
            <person name="James K.D."/>
            <person name="Churcher C.M."/>
            <person name="Mungall K.L."/>
            <person name="Baker S."/>
            <person name="Basham D."/>
            <person name="Bentley S.D."/>
            <person name="Brooks K."/>
            <person name="Cerdeno-Tarraga A.-M."/>
            <person name="Chillingworth T."/>
            <person name="Cronin A."/>
            <person name="Davies R.M."/>
            <person name="Davis P."/>
            <person name="Dougan G."/>
            <person name="Feltwell T."/>
            <person name="Hamlin N."/>
            <person name="Holroyd S."/>
            <person name="Jagels K."/>
            <person name="Karlyshev A.V."/>
            <person name="Leather S."/>
            <person name="Moule S."/>
            <person name="Oyston P.C.F."/>
            <person name="Quail M.A."/>
            <person name="Rutherford K.M."/>
            <person name="Simmonds M."/>
            <person name="Skelton J."/>
            <person name="Stevens K."/>
            <person name="Whitehead S."/>
            <person name="Barrell B.G."/>
        </authorList>
    </citation>
    <scope>NUCLEOTIDE SEQUENCE [LARGE SCALE GENOMIC DNA]</scope>
    <source>
        <strain>CO-92 / Biovar Orientalis</strain>
    </source>
</reference>
<reference key="2">
    <citation type="journal article" date="2002" name="J. Bacteriol.">
        <title>Genome sequence of Yersinia pestis KIM.</title>
        <authorList>
            <person name="Deng W."/>
            <person name="Burland V."/>
            <person name="Plunkett G. III"/>
            <person name="Boutin A."/>
            <person name="Mayhew G.F."/>
            <person name="Liss P."/>
            <person name="Perna N.T."/>
            <person name="Rose D.J."/>
            <person name="Mau B."/>
            <person name="Zhou S."/>
            <person name="Schwartz D.C."/>
            <person name="Fetherston J.D."/>
            <person name="Lindler L.E."/>
            <person name="Brubaker R.R."/>
            <person name="Plano G.V."/>
            <person name="Straley S.C."/>
            <person name="McDonough K.A."/>
            <person name="Nilles M.L."/>
            <person name="Matson J.S."/>
            <person name="Blattner F.R."/>
            <person name="Perry R.D."/>
        </authorList>
    </citation>
    <scope>NUCLEOTIDE SEQUENCE [LARGE SCALE GENOMIC DNA]</scope>
    <source>
        <strain>KIM10+ / Biovar Mediaevalis</strain>
    </source>
</reference>
<reference key="3">
    <citation type="journal article" date="2004" name="DNA Res.">
        <title>Complete genome sequence of Yersinia pestis strain 91001, an isolate avirulent to humans.</title>
        <authorList>
            <person name="Song Y."/>
            <person name="Tong Z."/>
            <person name="Wang J."/>
            <person name="Wang L."/>
            <person name="Guo Z."/>
            <person name="Han Y."/>
            <person name="Zhang J."/>
            <person name="Pei D."/>
            <person name="Zhou D."/>
            <person name="Qin H."/>
            <person name="Pang X."/>
            <person name="Han Y."/>
            <person name="Zhai J."/>
            <person name="Li M."/>
            <person name="Cui B."/>
            <person name="Qi Z."/>
            <person name="Jin L."/>
            <person name="Dai R."/>
            <person name="Chen F."/>
            <person name="Li S."/>
            <person name="Ye C."/>
            <person name="Du Z."/>
            <person name="Lin W."/>
            <person name="Wang J."/>
            <person name="Yu J."/>
            <person name="Yang H."/>
            <person name="Wang J."/>
            <person name="Huang P."/>
            <person name="Yang R."/>
        </authorList>
    </citation>
    <scope>NUCLEOTIDE SEQUENCE [LARGE SCALE GENOMIC DNA]</scope>
    <source>
        <strain>91001 / Biovar Mediaevalis</strain>
    </source>
</reference>
<organism>
    <name type="scientific">Yersinia pestis</name>
    <dbReference type="NCBI Taxonomy" id="632"/>
    <lineage>
        <taxon>Bacteria</taxon>
        <taxon>Pseudomonadati</taxon>
        <taxon>Pseudomonadota</taxon>
        <taxon>Gammaproteobacteria</taxon>
        <taxon>Enterobacterales</taxon>
        <taxon>Yersiniaceae</taxon>
        <taxon>Yersinia</taxon>
    </lineage>
</organism>
<gene>
    <name evidence="1" type="primary">mdtA</name>
    <name type="ordered locus">YPO2847</name>
    <name type="ordered locus">y1386</name>
    <name type="ordered locus">YP_2714</name>
</gene>